<sequence>MSYTIEGATGAWELVIGLEVHAQVISQSKLFSGAATAFGAEPNSQVSLVDAALPGMLPVLNRECVAQAVRTGLGLKAHINPVSRFDRKNYFYADLPQGYQISQFAHPIVGSGTIEIELQDGSTRQIGVTRLHLEQDAGKSLHDQDPTRSFIDLNRSGVALMEIVSEPDMRSPEEAGAYLRKLRTILRYLGTCDGNMEEGSMRADVNVSVRRAGEPFRTRCEIKNVNSIRYVMQAIEAEAKRQIAIWEEGEEVDQETRLFDPSRGETRSMRSKEDAHDYRYFPDPDLLPLVLDEDWIEGLKASLPELPDEKSARFVSEYGLTRYDAGVLVAEQASAHFFETVAKGRDARLAANYITGDLFAVLNRTGRSITDSPISAEALGGLLDLLADNTINGRIAKEVFEAMAETGEHPADIVEARGLRQVTDTGAIDTAVAQVLEANPDKLAEYRSGKDKLFGFFVGQVMKAMQGKGNPALVNEALKKALG</sequence>
<evidence type="ECO:0000255" key="1">
    <source>
        <dbReference type="HAMAP-Rule" id="MF_00121"/>
    </source>
</evidence>
<comment type="function">
    <text evidence="1">Allows the formation of correctly charged Asn-tRNA(Asn) or Gln-tRNA(Gln) through the transamidation of misacylated Asp-tRNA(Asn) or Glu-tRNA(Gln) in organisms which lack either or both of asparaginyl-tRNA or glutaminyl-tRNA synthetases. The reaction takes place in the presence of glutamine and ATP through an activated phospho-Asp-tRNA(Asn) or phospho-Glu-tRNA(Gln).</text>
</comment>
<comment type="catalytic activity">
    <reaction evidence="1">
        <text>L-glutamyl-tRNA(Gln) + L-glutamine + ATP + H2O = L-glutaminyl-tRNA(Gln) + L-glutamate + ADP + phosphate + H(+)</text>
        <dbReference type="Rhea" id="RHEA:17521"/>
        <dbReference type="Rhea" id="RHEA-COMP:9681"/>
        <dbReference type="Rhea" id="RHEA-COMP:9684"/>
        <dbReference type="ChEBI" id="CHEBI:15377"/>
        <dbReference type="ChEBI" id="CHEBI:15378"/>
        <dbReference type="ChEBI" id="CHEBI:29985"/>
        <dbReference type="ChEBI" id="CHEBI:30616"/>
        <dbReference type="ChEBI" id="CHEBI:43474"/>
        <dbReference type="ChEBI" id="CHEBI:58359"/>
        <dbReference type="ChEBI" id="CHEBI:78520"/>
        <dbReference type="ChEBI" id="CHEBI:78521"/>
        <dbReference type="ChEBI" id="CHEBI:456216"/>
    </reaction>
</comment>
<comment type="catalytic activity">
    <reaction evidence="1">
        <text>L-aspartyl-tRNA(Asn) + L-glutamine + ATP + H2O = L-asparaginyl-tRNA(Asn) + L-glutamate + ADP + phosphate + 2 H(+)</text>
        <dbReference type="Rhea" id="RHEA:14513"/>
        <dbReference type="Rhea" id="RHEA-COMP:9674"/>
        <dbReference type="Rhea" id="RHEA-COMP:9677"/>
        <dbReference type="ChEBI" id="CHEBI:15377"/>
        <dbReference type="ChEBI" id="CHEBI:15378"/>
        <dbReference type="ChEBI" id="CHEBI:29985"/>
        <dbReference type="ChEBI" id="CHEBI:30616"/>
        <dbReference type="ChEBI" id="CHEBI:43474"/>
        <dbReference type="ChEBI" id="CHEBI:58359"/>
        <dbReference type="ChEBI" id="CHEBI:78515"/>
        <dbReference type="ChEBI" id="CHEBI:78516"/>
        <dbReference type="ChEBI" id="CHEBI:456216"/>
    </reaction>
</comment>
<comment type="subunit">
    <text evidence="1">Heterotrimer of A, B and C subunits.</text>
</comment>
<comment type="similarity">
    <text evidence="1">Belongs to the GatB/GatE family. GatB subfamily.</text>
</comment>
<proteinExistence type="inferred from homology"/>
<feature type="chain" id="PRO_1000015971" description="Aspartyl/glutamyl-tRNA(Asn/Gln) amidotransferase subunit B">
    <location>
        <begin position="1"/>
        <end position="483"/>
    </location>
</feature>
<keyword id="KW-0067">ATP-binding</keyword>
<keyword id="KW-0436">Ligase</keyword>
<keyword id="KW-0547">Nucleotide-binding</keyword>
<keyword id="KW-0648">Protein biosynthesis</keyword>
<keyword id="KW-1185">Reference proteome</keyword>
<gene>
    <name evidence="1" type="primary">gatB</name>
    <name type="ordered locus">GbCGDNIH1_0953</name>
</gene>
<reference key="1">
    <citation type="journal article" date="2007" name="J. Bacteriol.">
        <title>Genome sequence analysis of the emerging human pathogenic acetic acid bacterium Granulibacter bethesdensis.</title>
        <authorList>
            <person name="Greenberg D.E."/>
            <person name="Porcella S.F."/>
            <person name="Zelazny A.M."/>
            <person name="Virtaneva K."/>
            <person name="Sturdevant D.E."/>
            <person name="Kupko J.J. III"/>
            <person name="Barbian K.D."/>
            <person name="Babar A."/>
            <person name="Dorward D.W."/>
            <person name="Holland S.M."/>
        </authorList>
    </citation>
    <scope>NUCLEOTIDE SEQUENCE [LARGE SCALE GENOMIC DNA]</scope>
    <source>
        <strain>ATCC BAA-1260 / CGDNIH1</strain>
    </source>
</reference>
<name>GATB_GRABC</name>
<accession>Q0BTK1</accession>
<protein>
    <recommendedName>
        <fullName evidence="1">Aspartyl/glutamyl-tRNA(Asn/Gln) amidotransferase subunit B</fullName>
        <shortName evidence="1">Asp/Glu-ADT subunit B</shortName>
        <ecNumber evidence="1">6.3.5.-</ecNumber>
    </recommendedName>
</protein>
<organism>
    <name type="scientific">Granulibacter bethesdensis (strain ATCC BAA-1260 / CGDNIH1)</name>
    <dbReference type="NCBI Taxonomy" id="391165"/>
    <lineage>
        <taxon>Bacteria</taxon>
        <taxon>Pseudomonadati</taxon>
        <taxon>Pseudomonadota</taxon>
        <taxon>Alphaproteobacteria</taxon>
        <taxon>Acetobacterales</taxon>
        <taxon>Acetobacteraceae</taxon>
        <taxon>Granulibacter</taxon>
    </lineage>
</organism>
<dbReference type="EC" id="6.3.5.-" evidence="1"/>
<dbReference type="EMBL" id="CP000394">
    <property type="protein sequence ID" value="ABI61851.1"/>
    <property type="molecule type" value="Genomic_DNA"/>
</dbReference>
<dbReference type="RefSeq" id="WP_011631660.1">
    <property type="nucleotide sequence ID" value="NC_008343.2"/>
</dbReference>
<dbReference type="SMR" id="Q0BTK1"/>
<dbReference type="STRING" id="391165.GbCGDNIH1_0953"/>
<dbReference type="KEGG" id="gbe:GbCGDNIH1_0953"/>
<dbReference type="eggNOG" id="COG0064">
    <property type="taxonomic scope" value="Bacteria"/>
</dbReference>
<dbReference type="HOGENOM" id="CLU_019240_0_0_5"/>
<dbReference type="OrthoDB" id="9804078at2"/>
<dbReference type="Proteomes" id="UP000001963">
    <property type="component" value="Chromosome"/>
</dbReference>
<dbReference type="GO" id="GO:0050566">
    <property type="term" value="F:asparaginyl-tRNA synthase (glutamine-hydrolyzing) activity"/>
    <property type="evidence" value="ECO:0007669"/>
    <property type="project" value="RHEA"/>
</dbReference>
<dbReference type="GO" id="GO:0005524">
    <property type="term" value="F:ATP binding"/>
    <property type="evidence" value="ECO:0007669"/>
    <property type="project" value="UniProtKB-KW"/>
</dbReference>
<dbReference type="GO" id="GO:0050567">
    <property type="term" value="F:glutaminyl-tRNA synthase (glutamine-hydrolyzing) activity"/>
    <property type="evidence" value="ECO:0007669"/>
    <property type="project" value="UniProtKB-UniRule"/>
</dbReference>
<dbReference type="GO" id="GO:0070681">
    <property type="term" value="P:glutaminyl-tRNAGln biosynthesis via transamidation"/>
    <property type="evidence" value="ECO:0007669"/>
    <property type="project" value="TreeGrafter"/>
</dbReference>
<dbReference type="GO" id="GO:0006412">
    <property type="term" value="P:translation"/>
    <property type="evidence" value="ECO:0007669"/>
    <property type="project" value="UniProtKB-UniRule"/>
</dbReference>
<dbReference type="FunFam" id="1.10.10.410:FF:000001">
    <property type="entry name" value="Aspartyl/glutamyl-tRNA(Asn/Gln) amidotransferase subunit B"/>
    <property type="match status" value="1"/>
</dbReference>
<dbReference type="FunFam" id="1.10.150.380:FF:000001">
    <property type="entry name" value="Aspartyl/glutamyl-tRNA(Asn/Gln) amidotransferase subunit B"/>
    <property type="match status" value="1"/>
</dbReference>
<dbReference type="Gene3D" id="1.10.10.410">
    <property type="match status" value="1"/>
</dbReference>
<dbReference type="Gene3D" id="1.10.150.380">
    <property type="entry name" value="GatB domain, N-terminal subdomain"/>
    <property type="match status" value="1"/>
</dbReference>
<dbReference type="HAMAP" id="MF_00121">
    <property type="entry name" value="GatB"/>
    <property type="match status" value="1"/>
</dbReference>
<dbReference type="InterPro" id="IPR017959">
    <property type="entry name" value="Asn/Gln-tRNA_amidoTrfase_suB/E"/>
</dbReference>
<dbReference type="InterPro" id="IPR006075">
    <property type="entry name" value="Asn/Gln-tRNA_Trfase_suB/E_cat"/>
</dbReference>
<dbReference type="InterPro" id="IPR018027">
    <property type="entry name" value="Asn/Gln_amidotransferase"/>
</dbReference>
<dbReference type="InterPro" id="IPR003789">
    <property type="entry name" value="Asn/Gln_tRNA_amidoTrase-B-like"/>
</dbReference>
<dbReference type="InterPro" id="IPR004413">
    <property type="entry name" value="GatB"/>
</dbReference>
<dbReference type="InterPro" id="IPR042114">
    <property type="entry name" value="GatB_C_1"/>
</dbReference>
<dbReference type="InterPro" id="IPR023168">
    <property type="entry name" value="GatB_Yqey_C_2"/>
</dbReference>
<dbReference type="InterPro" id="IPR017958">
    <property type="entry name" value="Gln-tRNA_amidoTrfase_suB_CS"/>
</dbReference>
<dbReference type="InterPro" id="IPR014746">
    <property type="entry name" value="Gln_synth/guanido_kin_cat_dom"/>
</dbReference>
<dbReference type="NCBIfam" id="TIGR00133">
    <property type="entry name" value="gatB"/>
    <property type="match status" value="1"/>
</dbReference>
<dbReference type="NCBIfam" id="NF004012">
    <property type="entry name" value="PRK05477.1-2"/>
    <property type="match status" value="1"/>
</dbReference>
<dbReference type="NCBIfam" id="NF004014">
    <property type="entry name" value="PRK05477.1-4"/>
    <property type="match status" value="1"/>
</dbReference>
<dbReference type="NCBIfam" id="NF004015">
    <property type="entry name" value="PRK05477.1-5"/>
    <property type="match status" value="1"/>
</dbReference>
<dbReference type="PANTHER" id="PTHR11659">
    <property type="entry name" value="GLUTAMYL-TRNA GLN AMIDOTRANSFERASE SUBUNIT B MITOCHONDRIAL AND PROKARYOTIC PET112-RELATED"/>
    <property type="match status" value="1"/>
</dbReference>
<dbReference type="PANTHER" id="PTHR11659:SF0">
    <property type="entry name" value="GLUTAMYL-TRNA(GLN) AMIDOTRANSFERASE SUBUNIT B, MITOCHONDRIAL"/>
    <property type="match status" value="1"/>
</dbReference>
<dbReference type="Pfam" id="PF02934">
    <property type="entry name" value="GatB_N"/>
    <property type="match status" value="1"/>
</dbReference>
<dbReference type="Pfam" id="PF02637">
    <property type="entry name" value="GatB_Yqey"/>
    <property type="match status" value="1"/>
</dbReference>
<dbReference type="SMART" id="SM00845">
    <property type="entry name" value="GatB_Yqey"/>
    <property type="match status" value="1"/>
</dbReference>
<dbReference type="SUPFAM" id="SSF89095">
    <property type="entry name" value="GatB/YqeY motif"/>
    <property type="match status" value="1"/>
</dbReference>
<dbReference type="SUPFAM" id="SSF55931">
    <property type="entry name" value="Glutamine synthetase/guanido kinase"/>
    <property type="match status" value="1"/>
</dbReference>
<dbReference type="PROSITE" id="PS01234">
    <property type="entry name" value="GATB"/>
    <property type="match status" value="1"/>
</dbReference>